<evidence type="ECO:0000255" key="1">
    <source>
        <dbReference type="HAMAP-Rule" id="MF_01552"/>
    </source>
</evidence>
<dbReference type="EC" id="6.3.2.-" evidence="1"/>
<dbReference type="EMBL" id="AE015451">
    <property type="protein sequence ID" value="AAN65880.1"/>
    <property type="molecule type" value="Genomic_DNA"/>
</dbReference>
<dbReference type="RefSeq" id="NP_742416.1">
    <property type="nucleotide sequence ID" value="NC_002947.4"/>
</dbReference>
<dbReference type="RefSeq" id="WP_003255817.1">
    <property type="nucleotide sequence ID" value="NZ_CP169744.1"/>
</dbReference>
<dbReference type="SMR" id="Q88R85"/>
<dbReference type="STRING" id="160488.PP_0248"/>
<dbReference type="PaxDb" id="160488-PP_0248"/>
<dbReference type="DNASU" id="1043821"/>
<dbReference type="GeneID" id="83677509"/>
<dbReference type="KEGG" id="ppu:PP_0248"/>
<dbReference type="PATRIC" id="fig|160488.4.peg.265"/>
<dbReference type="eggNOG" id="COG0189">
    <property type="taxonomic scope" value="Bacteria"/>
</dbReference>
<dbReference type="HOGENOM" id="CLU_054353_0_1_6"/>
<dbReference type="OrthoDB" id="3865600at2"/>
<dbReference type="PhylomeDB" id="Q88R85"/>
<dbReference type="BioCyc" id="PPUT160488:G1G01-270-MONOMER"/>
<dbReference type="Proteomes" id="UP000000556">
    <property type="component" value="Chromosome"/>
</dbReference>
<dbReference type="GO" id="GO:0005737">
    <property type="term" value="C:cytoplasm"/>
    <property type="evidence" value="ECO:0007669"/>
    <property type="project" value="TreeGrafter"/>
</dbReference>
<dbReference type="GO" id="GO:0005524">
    <property type="term" value="F:ATP binding"/>
    <property type="evidence" value="ECO:0007669"/>
    <property type="project" value="UniProtKB-UniRule"/>
</dbReference>
<dbReference type="GO" id="GO:0046872">
    <property type="term" value="F:metal ion binding"/>
    <property type="evidence" value="ECO:0007669"/>
    <property type="project" value="UniProtKB-KW"/>
</dbReference>
<dbReference type="GO" id="GO:0018169">
    <property type="term" value="F:ribosomal S6-glutamic acid ligase activity"/>
    <property type="evidence" value="ECO:0007669"/>
    <property type="project" value="TreeGrafter"/>
</dbReference>
<dbReference type="GO" id="GO:0036211">
    <property type="term" value="P:protein modification process"/>
    <property type="evidence" value="ECO:0007669"/>
    <property type="project" value="InterPro"/>
</dbReference>
<dbReference type="GO" id="GO:0009432">
    <property type="term" value="P:SOS response"/>
    <property type="evidence" value="ECO:0007669"/>
    <property type="project" value="TreeGrafter"/>
</dbReference>
<dbReference type="GO" id="GO:0006412">
    <property type="term" value="P:translation"/>
    <property type="evidence" value="ECO:0007669"/>
    <property type="project" value="UniProtKB-KW"/>
</dbReference>
<dbReference type="FunFam" id="3.40.50.20:FF:000004">
    <property type="entry name" value="Probable alpha-L-glutamate ligase"/>
    <property type="match status" value="1"/>
</dbReference>
<dbReference type="FunFam" id="3.30.1490.20:FF:000005">
    <property type="entry name" value="Probable alpha-L-glutamate ligase 1"/>
    <property type="match status" value="1"/>
</dbReference>
<dbReference type="FunFam" id="3.30.470.20:FF:000016">
    <property type="entry name" value="Ribosomal protein S6--L-glutamate ligase"/>
    <property type="match status" value="1"/>
</dbReference>
<dbReference type="Gene3D" id="3.40.50.20">
    <property type="match status" value="1"/>
</dbReference>
<dbReference type="Gene3D" id="3.30.1490.20">
    <property type="entry name" value="ATP-grasp fold, A domain"/>
    <property type="match status" value="1"/>
</dbReference>
<dbReference type="Gene3D" id="3.30.470.20">
    <property type="entry name" value="ATP-grasp fold, B domain"/>
    <property type="match status" value="1"/>
</dbReference>
<dbReference type="HAMAP" id="MF_01552">
    <property type="entry name" value="RimK"/>
    <property type="match status" value="1"/>
</dbReference>
<dbReference type="InterPro" id="IPR011761">
    <property type="entry name" value="ATP-grasp"/>
</dbReference>
<dbReference type="InterPro" id="IPR013651">
    <property type="entry name" value="ATP-grasp_RimK-type"/>
</dbReference>
<dbReference type="InterPro" id="IPR013815">
    <property type="entry name" value="ATP_grasp_subdomain_1"/>
</dbReference>
<dbReference type="InterPro" id="IPR023533">
    <property type="entry name" value="RimK"/>
</dbReference>
<dbReference type="InterPro" id="IPR041107">
    <property type="entry name" value="Rimk_N"/>
</dbReference>
<dbReference type="InterPro" id="IPR004666">
    <property type="entry name" value="Rp_bS6_RimK/Lys_biosynth_LsyX"/>
</dbReference>
<dbReference type="NCBIfam" id="NF007764">
    <property type="entry name" value="PRK10446.1"/>
    <property type="match status" value="1"/>
</dbReference>
<dbReference type="NCBIfam" id="TIGR00768">
    <property type="entry name" value="rimK_fam"/>
    <property type="match status" value="1"/>
</dbReference>
<dbReference type="PANTHER" id="PTHR21621:SF7">
    <property type="entry name" value="RIBOSOMAL PROTEIN BS6--L-GLUTAMATE LIGASE"/>
    <property type="match status" value="1"/>
</dbReference>
<dbReference type="PANTHER" id="PTHR21621">
    <property type="entry name" value="RIBOSOMAL PROTEIN S6 MODIFICATION PROTEIN"/>
    <property type="match status" value="1"/>
</dbReference>
<dbReference type="Pfam" id="PF08443">
    <property type="entry name" value="RimK"/>
    <property type="match status" value="1"/>
</dbReference>
<dbReference type="Pfam" id="PF18030">
    <property type="entry name" value="Rimk_N"/>
    <property type="match status" value="1"/>
</dbReference>
<dbReference type="SUPFAM" id="SSF56059">
    <property type="entry name" value="Glutathione synthetase ATP-binding domain-like"/>
    <property type="match status" value="1"/>
</dbReference>
<dbReference type="PROSITE" id="PS50975">
    <property type="entry name" value="ATP_GRASP"/>
    <property type="match status" value="1"/>
</dbReference>
<accession>Q88R85</accession>
<reference key="1">
    <citation type="journal article" date="2002" name="Environ. Microbiol.">
        <title>Complete genome sequence and comparative analysis of the metabolically versatile Pseudomonas putida KT2440.</title>
        <authorList>
            <person name="Nelson K.E."/>
            <person name="Weinel C."/>
            <person name="Paulsen I.T."/>
            <person name="Dodson R.J."/>
            <person name="Hilbert H."/>
            <person name="Martins dos Santos V.A.P."/>
            <person name="Fouts D.E."/>
            <person name="Gill S.R."/>
            <person name="Pop M."/>
            <person name="Holmes M."/>
            <person name="Brinkac L.M."/>
            <person name="Beanan M.J."/>
            <person name="DeBoy R.T."/>
            <person name="Daugherty S.C."/>
            <person name="Kolonay J.F."/>
            <person name="Madupu R."/>
            <person name="Nelson W.C."/>
            <person name="White O."/>
            <person name="Peterson J.D."/>
            <person name="Khouri H.M."/>
            <person name="Hance I."/>
            <person name="Chris Lee P."/>
            <person name="Holtzapple E.K."/>
            <person name="Scanlan D."/>
            <person name="Tran K."/>
            <person name="Moazzez A."/>
            <person name="Utterback T.R."/>
            <person name="Rizzo M."/>
            <person name="Lee K."/>
            <person name="Kosack D."/>
            <person name="Moestl D."/>
            <person name="Wedler H."/>
            <person name="Lauber J."/>
            <person name="Stjepandic D."/>
            <person name="Hoheisel J."/>
            <person name="Straetz M."/>
            <person name="Heim S."/>
            <person name="Kiewitz C."/>
            <person name="Eisen J.A."/>
            <person name="Timmis K.N."/>
            <person name="Duesterhoeft A."/>
            <person name="Tuemmler B."/>
            <person name="Fraser C.M."/>
        </authorList>
    </citation>
    <scope>NUCLEOTIDE SEQUENCE [LARGE SCALE GENOMIC DNA]</scope>
    <source>
        <strain>ATCC 47054 / DSM 6125 / CFBP 8728 / NCIMB 11950 / KT2440</strain>
    </source>
</reference>
<name>RIMK_PSEPK</name>
<protein>
    <recommendedName>
        <fullName evidence="1">Probable alpha-L-glutamate ligase</fullName>
        <ecNumber evidence="1">6.3.2.-</ecNumber>
    </recommendedName>
</protein>
<keyword id="KW-0067">ATP-binding</keyword>
<keyword id="KW-0436">Ligase</keyword>
<keyword id="KW-0460">Magnesium</keyword>
<keyword id="KW-0464">Manganese</keyword>
<keyword id="KW-0479">Metal-binding</keyword>
<keyword id="KW-0547">Nucleotide-binding</keyword>
<keyword id="KW-0648">Protein biosynthesis</keyword>
<keyword id="KW-1185">Reference proteome</keyword>
<sequence>MKIAVLSRNPRLYSTRRLVEAGTQRGHEMVVIDTLRAYMNIASHKPQIHYRGKPLEGFDAVIPRIGASVTFYGCAVLRQFEMMGVYPLNESVAIARSRDKLRSLQLLSRRGIGLPITGFAHSPDDIPDLIQMVNGAPLVIKVLEGTQGIGVVLCETPQAAESVIEAFMGLKQNIMVQEYIKEAGGADIRCFVVGDKVIASMKRQAKPGEFRSNLHRGGVASLIKITPEERITAIRAAKVMGLSVAGVDILRSNHGPLVMEVNSSPGLEGIEVTTGKNVAGMIIEHLEKNGGPNQTRTKGKG</sequence>
<gene>
    <name evidence="1" type="primary">rimK</name>
    <name type="ordered locus">PP_0248</name>
</gene>
<comment type="cofactor">
    <cofactor evidence="1">
        <name>Mg(2+)</name>
        <dbReference type="ChEBI" id="CHEBI:18420"/>
    </cofactor>
    <cofactor evidence="1">
        <name>Mn(2+)</name>
        <dbReference type="ChEBI" id="CHEBI:29035"/>
    </cofactor>
    <text evidence="1">Binds 2 magnesium or manganese ions per subunit.</text>
</comment>
<comment type="similarity">
    <text evidence="1">Belongs to the RimK family.</text>
</comment>
<feature type="chain" id="PRO_0000205473" description="Probable alpha-L-glutamate ligase">
    <location>
        <begin position="1"/>
        <end position="301"/>
    </location>
</feature>
<feature type="domain" description="ATP-grasp" evidence="1">
    <location>
        <begin position="104"/>
        <end position="287"/>
    </location>
</feature>
<feature type="binding site" evidence="1">
    <location>
        <position position="141"/>
    </location>
    <ligand>
        <name>ATP</name>
        <dbReference type="ChEBI" id="CHEBI:30616"/>
    </ligand>
</feature>
<feature type="binding site" evidence="1">
    <location>
        <begin position="178"/>
        <end position="179"/>
    </location>
    <ligand>
        <name>ATP</name>
        <dbReference type="ChEBI" id="CHEBI:30616"/>
    </ligand>
</feature>
<feature type="binding site" evidence="1">
    <location>
        <position position="187"/>
    </location>
    <ligand>
        <name>ATP</name>
        <dbReference type="ChEBI" id="CHEBI:30616"/>
    </ligand>
</feature>
<feature type="binding site" evidence="1">
    <location>
        <begin position="211"/>
        <end position="213"/>
    </location>
    <ligand>
        <name>ATP</name>
        <dbReference type="ChEBI" id="CHEBI:30616"/>
    </ligand>
</feature>
<feature type="binding site" evidence="1">
    <location>
        <position position="248"/>
    </location>
    <ligand>
        <name>Mg(2+)</name>
        <dbReference type="ChEBI" id="CHEBI:18420"/>
        <label>1</label>
    </ligand>
</feature>
<feature type="binding site" evidence="1">
    <location>
        <position position="248"/>
    </location>
    <ligand>
        <name>Mn(2+)</name>
        <dbReference type="ChEBI" id="CHEBI:29035"/>
        <label>1</label>
    </ligand>
</feature>
<feature type="binding site" evidence="1">
    <location>
        <position position="260"/>
    </location>
    <ligand>
        <name>Mg(2+)</name>
        <dbReference type="ChEBI" id="CHEBI:18420"/>
        <label>1</label>
    </ligand>
</feature>
<feature type="binding site" evidence="1">
    <location>
        <position position="260"/>
    </location>
    <ligand>
        <name>Mg(2+)</name>
        <dbReference type="ChEBI" id="CHEBI:18420"/>
        <label>2</label>
    </ligand>
</feature>
<feature type="binding site" evidence="1">
    <location>
        <position position="260"/>
    </location>
    <ligand>
        <name>Mn(2+)</name>
        <dbReference type="ChEBI" id="CHEBI:29035"/>
        <label>1</label>
    </ligand>
</feature>
<feature type="binding site" evidence="1">
    <location>
        <position position="260"/>
    </location>
    <ligand>
        <name>Mn(2+)</name>
        <dbReference type="ChEBI" id="CHEBI:29035"/>
        <label>2</label>
    </ligand>
</feature>
<feature type="binding site" evidence="1">
    <location>
        <position position="262"/>
    </location>
    <ligand>
        <name>Mg(2+)</name>
        <dbReference type="ChEBI" id="CHEBI:18420"/>
        <label>2</label>
    </ligand>
</feature>
<feature type="binding site" evidence="1">
    <location>
        <position position="262"/>
    </location>
    <ligand>
        <name>Mn(2+)</name>
        <dbReference type="ChEBI" id="CHEBI:29035"/>
        <label>2</label>
    </ligand>
</feature>
<organism>
    <name type="scientific">Pseudomonas putida (strain ATCC 47054 / DSM 6125 / CFBP 8728 / NCIMB 11950 / KT2440)</name>
    <dbReference type="NCBI Taxonomy" id="160488"/>
    <lineage>
        <taxon>Bacteria</taxon>
        <taxon>Pseudomonadati</taxon>
        <taxon>Pseudomonadota</taxon>
        <taxon>Gammaproteobacteria</taxon>
        <taxon>Pseudomonadales</taxon>
        <taxon>Pseudomonadaceae</taxon>
        <taxon>Pseudomonas</taxon>
    </lineage>
</organism>
<proteinExistence type="inferred from homology"/>